<proteinExistence type="inferred from homology"/>
<reference key="1">
    <citation type="journal article" date="2008" name="J. Bacteriol.">
        <title>Complete genome sequence of uropathogenic Proteus mirabilis, a master of both adherence and motility.</title>
        <authorList>
            <person name="Pearson M.M."/>
            <person name="Sebaihia M."/>
            <person name="Churcher C."/>
            <person name="Quail M.A."/>
            <person name="Seshasayee A.S."/>
            <person name="Luscombe N.M."/>
            <person name="Abdellah Z."/>
            <person name="Arrosmith C."/>
            <person name="Atkin B."/>
            <person name="Chillingworth T."/>
            <person name="Hauser H."/>
            <person name="Jagels K."/>
            <person name="Moule S."/>
            <person name="Mungall K."/>
            <person name="Norbertczak H."/>
            <person name="Rabbinowitsch E."/>
            <person name="Walker D."/>
            <person name="Whithead S."/>
            <person name="Thomson N.R."/>
            <person name="Rather P.N."/>
            <person name="Parkhill J."/>
            <person name="Mobley H.L.T."/>
        </authorList>
    </citation>
    <scope>NUCLEOTIDE SEQUENCE [LARGE SCALE GENOMIC DNA]</scope>
    <source>
        <strain>HI4320</strain>
    </source>
</reference>
<feature type="chain" id="PRO_1000201125" description="Phosphoglucosamine mutase">
    <location>
        <begin position="1"/>
        <end position="445"/>
    </location>
</feature>
<feature type="active site" description="Phosphoserine intermediate" evidence="1">
    <location>
        <position position="102"/>
    </location>
</feature>
<feature type="binding site" description="via phosphate group" evidence="1">
    <location>
        <position position="102"/>
    </location>
    <ligand>
        <name>Mg(2+)</name>
        <dbReference type="ChEBI" id="CHEBI:18420"/>
    </ligand>
</feature>
<feature type="binding site" evidence="1">
    <location>
        <position position="241"/>
    </location>
    <ligand>
        <name>Mg(2+)</name>
        <dbReference type="ChEBI" id="CHEBI:18420"/>
    </ligand>
</feature>
<feature type="binding site" evidence="1">
    <location>
        <position position="243"/>
    </location>
    <ligand>
        <name>Mg(2+)</name>
        <dbReference type="ChEBI" id="CHEBI:18420"/>
    </ligand>
</feature>
<feature type="binding site" evidence="1">
    <location>
        <position position="245"/>
    </location>
    <ligand>
        <name>Mg(2+)</name>
        <dbReference type="ChEBI" id="CHEBI:18420"/>
    </ligand>
</feature>
<feature type="modified residue" description="Phosphoserine" evidence="1">
    <location>
        <position position="102"/>
    </location>
</feature>
<gene>
    <name evidence="1" type="primary">glmM</name>
    <name type="ordered locus">PMI3414</name>
</gene>
<accession>B4F2B5</accession>
<dbReference type="EC" id="5.4.2.10" evidence="1"/>
<dbReference type="EMBL" id="AM942759">
    <property type="protein sequence ID" value="CAR46691.1"/>
    <property type="molecule type" value="Genomic_DNA"/>
</dbReference>
<dbReference type="RefSeq" id="WP_004246241.1">
    <property type="nucleotide sequence ID" value="NC_010554.1"/>
</dbReference>
<dbReference type="SMR" id="B4F2B5"/>
<dbReference type="EnsemblBacteria" id="CAR46691">
    <property type="protein sequence ID" value="CAR46691"/>
    <property type="gene ID" value="PMI3414"/>
</dbReference>
<dbReference type="GeneID" id="6801824"/>
<dbReference type="KEGG" id="pmr:PMI3414"/>
<dbReference type="eggNOG" id="COG1109">
    <property type="taxonomic scope" value="Bacteria"/>
</dbReference>
<dbReference type="HOGENOM" id="CLU_016950_7_0_6"/>
<dbReference type="Proteomes" id="UP000008319">
    <property type="component" value="Chromosome"/>
</dbReference>
<dbReference type="GO" id="GO:0005829">
    <property type="term" value="C:cytosol"/>
    <property type="evidence" value="ECO:0007669"/>
    <property type="project" value="TreeGrafter"/>
</dbReference>
<dbReference type="GO" id="GO:0000287">
    <property type="term" value="F:magnesium ion binding"/>
    <property type="evidence" value="ECO:0007669"/>
    <property type="project" value="UniProtKB-UniRule"/>
</dbReference>
<dbReference type="GO" id="GO:0008966">
    <property type="term" value="F:phosphoglucosamine mutase activity"/>
    <property type="evidence" value="ECO:0007669"/>
    <property type="project" value="UniProtKB-UniRule"/>
</dbReference>
<dbReference type="GO" id="GO:0004615">
    <property type="term" value="F:phosphomannomutase activity"/>
    <property type="evidence" value="ECO:0007669"/>
    <property type="project" value="TreeGrafter"/>
</dbReference>
<dbReference type="GO" id="GO:0005975">
    <property type="term" value="P:carbohydrate metabolic process"/>
    <property type="evidence" value="ECO:0007669"/>
    <property type="project" value="InterPro"/>
</dbReference>
<dbReference type="GO" id="GO:0009252">
    <property type="term" value="P:peptidoglycan biosynthetic process"/>
    <property type="evidence" value="ECO:0007669"/>
    <property type="project" value="TreeGrafter"/>
</dbReference>
<dbReference type="GO" id="GO:0006048">
    <property type="term" value="P:UDP-N-acetylglucosamine biosynthetic process"/>
    <property type="evidence" value="ECO:0007669"/>
    <property type="project" value="TreeGrafter"/>
</dbReference>
<dbReference type="CDD" id="cd05802">
    <property type="entry name" value="GlmM"/>
    <property type="match status" value="1"/>
</dbReference>
<dbReference type="FunFam" id="3.30.310.50:FF:000001">
    <property type="entry name" value="Phosphoglucosamine mutase"/>
    <property type="match status" value="1"/>
</dbReference>
<dbReference type="FunFam" id="3.40.120.10:FF:000001">
    <property type="entry name" value="Phosphoglucosamine mutase"/>
    <property type="match status" value="1"/>
</dbReference>
<dbReference type="FunFam" id="3.40.120.10:FF:000002">
    <property type="entry name" value="Phosphoglucosamine mutase"/>
    <property type="match status" value="1"/>
</dbReference>
<dbReference type="Gene3D" id="3.40.120.10">
    <property type="entry name" value="Alpha-D-Glucose-1,6-Bisphosphate, subunit A, domain 3"/>
    <property type="match status" value="3"/>
</dbReference>
<dbReference type="Gene3D" id="3.30.310.50">
    <property type="entry name" value="Alpha-D-phosphohexomutase, C-terminal domain"/>
    <property type="match status" value="1"/>
</dbReference>
<dbReference type="HAMAP" id="MF_01554_B">
    <property type="entry name" value="GlmM_B"/>
    <property type="match status" value="1"/>
</dbReference>
<dbReference type="InterPro" id="IPR005844">
    <property type="entry name" value="A-D-PHexomutase_a/b/a-I"/>
</dbReference>
<dbReference type="InterPro" id="IPR016055">
    <property type="entry name" value="A-D-PHexomutase_a/b/a-I/II/III"/>
</dbReference>
<dbReference type="InterPro" id="IPR005845">
    <property type="entry name" value="A-D-PHexomutase_a/b/a-II"/>
</dbReference>
<dbReference type="InterPro" id="IPR005846">
    <property type="entry name" value="A-D-PHexomutase_a/b/a-III"/>
</dbReference>
<dbReference type="InterPro" id="IPR005843">
    <property type="entry name" value="A-D-PHexomutase_C"/>
</dbReference>
<dbReference type="InterPro" id="IPR036900">
    <property type="entry name" value="A-D-PHexomutase_C_sf"/>
</dbReference>
<dbReference type="InterPro" id="IPR016066">
    <property type="entry name" value="A-D-PHexomutase_CS"/>
</dbReference>
<dbReference type="InterPro" id="IPR005841">
    <property type="entry name" value="Alpha-D-phosphohexomutase_SF"/>
</dbReference>
<dbReference type="InterPro" id="IPR006352">
    <property type="entry name" value="GlmM_bact"/>
</dbReference>
<dbReference type="InterPro" id="IPR050060">
    <property type="entry name" value="Phosphoglucosamine_mutase"/>
</dbReference>
<dbReference type="NCBIfam" id="TIGR01455">
    <property type="entry name" value="glmM"/>
    <property type="match status" value="1"/>
</dbReference>
<dbReference type="NCBIfam" id="NF008139">
    <property type="entry name" value="PRK10887.1"/>
    <property type="match status" value="1"/>
</dbReference>
<dbReference type="PANTHER" id="PTHR42946:SF1">
    <property type="entry name" value="PHOSPHOGLUCOMUTASE (ALPHA-D-GLUCOSE-1,6-BISPHOSPHATE-DEPENDENT)"/>
    <property type="match status" value="1"/>
</dbReference>
<dbReference type="PANTHER" id="PTHR42946">
    <property type="entry name" value="PHOSPHOHEXOSE MUTASE"/>
    <property type="match status" value="1"/>
</dbReference>
<dbReference type="Pfam" id="PF02878">
    <property type="entry name" value="PGM_PMM_I"/>
    <property type="match status" value="1"/>
</dbReference>
<dbReference type="Pfam" id="PF02879">
    <property type="entry name" value="PGM_PMM_II"/>
    <property type="match status" value="1"/>
</dbReference>
<dbReference type="Pfam" id="PF02880">
    <property type="entry name" value="PGM_PMM_III"/>
    <property type="match status" value="1"/>
</dbReference>
<dbReference type="Pfam" id="PF00408">
    <property type="entry name" value="PGM_PMM_IV"/>
    <property type="match status" value="1"/>
</dbReference>
<dbReference type="PRINTS" id="PR00509">
    <property type="entry name" value="PGMPMM"/>
</dbReference>
<dbReference type="SUPFAM" id="SSF55957">
    <property type="entry name" value="Phosphoglucomutase, C-terminal domain"/>
    <property type="match status" value="1"/>
</dbReference>
<dbReference type="SUPFAM" id="SSF53738">
    <property type="entry name" value="Phosphoglucomutase, first 3 domains"/>
    <property type="match status" value="3"/>
</dbReference>
<dbReference type="PROSITE" id="PS00710">
    <property type="entry name" value="PGM_PMM"/>
    <property type="match status" value="1"/>
</dbReference>
<name>GLMM_PROMH</name>
<evidence type="ECO:0000255" key="1">
    <source>
        <dbReference type="HAMAP-Rule" id="MF_01554"/>
    </source>
</evidence>
<protein>
    <recommendedName>
        <fullName evidence="1">Phosphoglucosamine mutase</fullName>
        <ecNumber evidence="1">5.4.2.10</ecNumber>
    </recommendedName>
</protein>
<sequence length="445" mass="47989">MSERKYFGTDGIRGKVGDSPITPDFVLKLGWAAGKVLARHGSRKIIIGKDTRISGYMLESALEAGLAAAGLSASFTGPMPTPAVAYLTRTFRAEAGIVISASHNPYYDNGIKFFSIDGTKLPDEVEEAIEAEMEKPITCVESAELGRANRIVDAAGRYIEFCKGTFPNENNLNGLKVVVDCAHGATYHIAPNVFRELGAEVITIGCEPTGININDECGATDVRMLQKRVLEEGADVGLAFDGDGDRIIMVDHKGLKVDGDQILYIIAREALRQGQLRGGAVGTLMSNMGLEIALKQLGIPFVRAKVGDRYVLEKLQEKGWRLGAENSGHIILLDKTTTGDGIVAGLQVLSAMVRNHMSLHDLCSGMKLLPQILVNVRFTGNHDPLQSTEVQQVAKEVEAELGGKGRVLLRKSGTEPLIRVMVEGENEEQVTAMANRIADAVKHVG</sequence>
<comment type="function">
    <text evidence="1">Catalyzes the conversion of glucosamine-6-phosphate to glucosamine-1-phosphate.</text>
</comment>
<comment type="catalytic activity">
    <reaction evidence="1">
        <text>alpha-D-glucosamine 1-phosphate = D-glucosamine 6-phosphate</text>
        <dbReference type="Rhea" id="RHEA:23424"/>
        <dbReference type="ChEBI" id="CHEBI:58516"/>
        <dbReference type="ChEBI" id="CHEBI:58725"/>
        <dbReference type="EC" id="5.4.2.10"/>
    </reaction>
</comment>
<comment type="cofactor">
    <cofactor evidence="1">
        <name>Mg(2+)</name>
        <dbReference type="ChEBI" id="CHEBI:18420"/>
    </cofactor>
    <text evidence="1">Binds 1 Mg(2+) ion per subunit.</text>
</comment>
<comment type="PTM">
    <text evidence="1">Activated by phosphorylation.</text>
</comment>
<comment type="similarity">
    <text evidence="1">Belongs to the phosphohexose mutase family.</text>
</comment>
<keyword id="KW-0413">Isomerase</keyword>
<keyword id="KW-0460">Magnesium</keyword>
<keyword id="KW-0479">Metal-binding</keyword>
<keyword id="KW-0597">Phosphoprotein</keyword>
<keyword id="KW-1185">Reference proteome</keyword>
<organism>
    <name type="scientific">Proteus mirabilis (strain HI4320)</name>
    <dbReference type="NCBI Taxonomy" id="529507"/>
    <lineage>
        <taxon>Bacteria</taxon>
        <taxon>Pseudomonadati</taxon>
        <taxon>Pseudomonadota</taxon>
        <taxon>Gammaproteobacteria</taxon>
        <taxon>Enterobacterales</taxon>
        <taxon>Morganellaceae</taxon>
        <taxon>Proteus</taxon>
    </lineage>
</organism>